<comment type="function">
    <text evidence="1">Catalyzes the attachment of proline to tRNA(Pro) in a two-step reaction: proline is first activated by ATP to form Pro-AMP and then transferred to the acceptor end of tRNA(Pro).</text>
</comment>
<comment type="catalytic activity">
    <reaction evidence="1">
        <text>tRNA(Pro) + L-proline + ATP = L-prolyl-tRNA(Pro) + AMP + diphosphate</text>
        <dbReference type="Rhea" id="RHEA:14305"/>
        <dbReference type="Rhea" id="RHEA-COMP:9700"/>
        <dbReference type="Rhea" id="RHEA-COMP:9702"/>
        <dbReference type="ChEBI" id="CHEBI:30616"/>
        <dbReference type="ChEBI" id="CHEBI:33019"/>
        <dbReference type="ChEBI" id="CHEBI:60039"/>
        <dbReference type="ChEBI" id="CHEBI:78442"/>
        <dbReference type="ChEBI" id="CHEBI:78532"/>
        <dbReference type="ChEBI" id="CHEBI:456215"/>
        <dbReference type="EC" id="6.1.1.15"/>
    </reaction>
</comment>
<comment type="subunit">
    <text evidence="1">Homodimer.</text>
</comment>
<comment type="subcellular location">
    <subcellularLocation>
        <location evidence="1">Cytoplasm</location>
    </subcellularLocation>
</comment>
<comment type="similarity">
    <text evidence="1">Belongs to the class-II aminoacyl-tRNA synthetase family. ProS type 2 subfamily.</text>
</comment>
<name>SYP_BRASB</name>
<proteinExistence type="inferred from homology"/>
<sequence length="444" mass="49654">MRLSRFFLPILKENPKEAEIVSHRLMLRAGMLRQEAAGIYAWLPLGFKVLKKIEQIVREEQNRAGALELLMPTLQLADLWRESGRYDAYGPEMLRISDRHKRELLYGPTNEEMITDIFRAYVKSYRNLPLNLYHIQWKFRDEQRPRFGVMRGREFLMKDAYSFDLDEAGARRAYNKMFVAYLRTFARMGLKGIPMRAETGPIGGDLSHEFIVLAETGESGVYCDRDVLDLPIPPASVDYDGDLTPIIKQWTSLYAATEDVHDGARFEAEVPEERRLHTRGIEVGQIFYFGTKYSEPMKALVAGPDGAEVTIHGGSYGVGVSRLAGAIIEACHDDAGIKWPEEVAPFRAVILNLKQGGSDTDAACEQLYRDLLAKGVDVLYDDTEQRAGGKFATADLIGIPWQIMVGPKSLAEGKVEVKTRSDGARQMMSPADVVARLGGGTVAG</sequence>
<organism>
    <name type="scientific">Bradyrhizobium sp. (strain BTAi1 / ATCC BAA-1182)</name>
    <dbReference type="NCBI Taxonomy" id="288000"/>
    <lineage>
        <taxon>Bacteria</taxon>
        <taxon>Pseudomonadati</taxon>
        <taxon>Pseudomonadota</taxon>
        <taxon>Alphaproteobacteria</taxon>
        <taxon>Hyphomicrobiales</taxon>
        <taxon>Nitrobacteraceae</taxon>
        <taxon>Bradyrhizobium</taxon>
    </lineage>
</organism>
<gene>
    <name evidence="1" type="primary">proS</name>
    <name type="ordered locus">BBta_4531</name>
</gene>
<protein>
    <recommendedName>
        <fullName evidence="1">Proline--tRNA ligase</fullName>
        <ecNumber evidence="1">6.1.1.15</ecNumber>
    </recommendedName>
    <alternativeName>
        <fullName evidence="1">Prolyl-tRNA synthetase</fullName>
        <shortName evidence="1">ProRS</shortName>
    </alternativeName>
</protein>
<feature type="chain" id="PRO_1000069177" description="Proline--tRNA ligase">
    <location>
        <begin position="1"/>
        <end position="444"/>
    </location>
</feature>
<reference key="1">
    <citation type="journal article" date="2007" name="Science">
        <title>Legumes symbioses: absence of nod genes in photosynthetic bradyrhizobia.</title>
        <authorList>
            <person name="Giraud E."/>
            <person name="Moulin L."/>
            <person name="Vallenet D."/>
            <person name="Barbe V."/>
            <person name="Cytryn E."/>
            <person name="Avarre J.-C."/>
            <person name="Jaubert M."/>
            <person name="Simon D."/>
            <person name="Cartieaux F."/>
            <person name="Prin Y."/>
            <person name="Bena G."/>
            <person name="Hannibal L."/>
            <person name="Fardoux J."/>
            <person name="Kojadinovic M."/>
            <person name="Vuillet L."/>
            <person name="Lajus A."/>
            <person name="Cruveiller S."/>
            <person name="Rouy Z."/>
            <person name="Mangenot S."/>
            <person name="Segurens B."/>
            <person name="Dossat C."/>
            <person name="Franck W.L."/>
            <person name="Chang W.-S."/>
            <person name="Saunders E."/>
            <person name="Bruce D."/>
            <person name="Richardson P."/>
            <person name="Normand P."/>
            <person name="Dreyfus B."/>
            <person name="Pignol D."/>
            <person name="Stacey G."/>
            <person name="Emerich D."/>
            <person name="Vermeglio A."/>
            <person name="Medigue C."/>
            <person name="Sadowsky M."/>
        </authorList>
    </citation>
    <scope>NUCLEOTIDE SEQUENCE [LARGE SCALE GENOMIC DNA]</scope>
    <source>
        <strain>BTAi1 / ATCC BAA-1182</strain>
    </source>
</reference>
<keyword id="KW-0030">Aminoacyl-tRNA synthetase</keyword>
<keyword id="KW-0067">ATP-binding</keyword>
<keyword id="KW-0963">Cytoplasm</keyword>
<keyword id="KW-0436">Ligase</keyword>
<keyword id="KW-0547">Nucleotide-binding</keyword>
<keyword id="KW-0648">Protein biosynthesis</keyword>
<keyword id="KW-1185">Reference proteome</keyword>
<evidence type="ECO:0000255" key="1">
    <source>
        <dbReference type="HAMAP-Rule" id="MF_01570"/>
    </source>
</evidence>
<dbReference type="EC" id="6.1.1.15" evidence="1"/>
<dbReference type="EMBL" id="CP000494">
    <property type="protein sequence ID" value="ABQ36562.1"/>
    <property type="molecule type" value="Genomic_DNA"/>
</dbReference>
<dbReference type="RefSeq" id="WP_012044558.1">
    <property type="nucleotide sequence ID" value="NC_009485.1"/>
</dbReference>
<dbReference type="SMR" id="A5EK68"/>
<dbReference type="STRING" id="288000.BBta_4531"/>
<dbReference type="KEGG" id="bbt:BBta_4531"/>
<dbReference type="eggNOG" id="COG0442">
    <property type="taxonomic scope" value="Bacteria"/>
</dbReference>
<dbReference type="HOGENOM" id="CLU_016739_4_2_5"/>
<dbReference type="OrthoDB" id="9809052at2"/>
<dbReference type="Proteomes" id="UP000000246">
    <property type="component" value="Chromosome"/>
</dbReference>
<dbReference type="GO" id="GO:0005829">
    <property type="term" value="C:cytosol"/>
    <property type="evidence" value="ECO:0007669"/>
    <property type="project" value="TreeGrafter"/>
</dbReference>
<dbReference type="GO" id="GO:0005524">
    <property type="term" value="F:ATP binding"/>
    <property type="evidence" value="ECO:0007669"/>
    <property type="project" value="UniProtKB-UniRule"/>
</dbReference>
<dbReference type="GO" id="GO:0004827">
    <property type="term" value="F:proline-tRNA ligase activity"/>
    <property type="evidence" value="ECO:0007669"/>
    <property type="project" value="UniProtKB-UniRule"/>
</dbReference>
<dbReference type="GO" id="GO:0006433">
    <property type="term" value="P:prolyl-tRNA aminoacylation"/>
    <property type="evidence" value="ECO:0007669"/>
    <property type="project" value="UniProtKB-UniRule"/>
</dbReference>
<dbReference type="CDD" id="cd00861">
    <property type="entry name" value="ProRS_anticodon_short"/>
    <property type="match status" value="1"/>
</dbReference>
<dbReference type="CDD" id="cd00779">
    <property type="entry name" value="ProRS_core_prok"/>
    <property type="match status" value="1"/>
</dbReference>
<dbReference type="FunFam" id="3.30.930.10:FF:000042">
    <property type="entry name" value="probable proline--tRNA ligase, mitochondrial"/>
    <property type="match status" value="1"/>
</dbReference>
<dbReference type="FunFam" id="3.40.50.800:FF:000032">
    <property type="entry name" value="Proline--tRNA ligase"/>
    <property type="match status" value="1"/>
</dbReference>
<dbReference type="Gene3D" id="3.40.50.800">
    <property type="entry name" value="Anticodon-binding domain"/>
    <property type="match status" value="1"/>
</dbReference>
<dbReference type="Gene3D" id="3.30.930.10">
    <property type="entry name" value="Bira Bifunctional Protein, Domain 2"/>
    <property type="match status" value="1"/>
</dbReference>
<dbReference type="HAMAP" id="MF_01570">
    <property type="entry name" value="Pro_tRNA_synth_type2"/>
    <property type="match status" value="1"/>
</dbReference>
<dbReference type="InterPro" id="IPR002314">
    <property type="entry name" value="aa-tRNA-synt_IIb"/>
</dbReference>
<dbReference type="InterPro" id="IPR006195">
    <property type="entry name" value="aa-tRNA-synth_II"/>
</dbReference>
<dbReference type="InterPro" id="IPR045864">
    <property type="entry name" value="aa-tRNA-synth_II/BPL/LPL"/>
</dbReference>
<dbReference type="InterPro" id="IPR004154">
    <property type="entry name" value="Anticodon-bd"/>
</dbReference>
<dbReference type="InterPro" id="IPR036621">
    <property type="entry name" value="Anticodon-bd_dom_sf"/>
</dbReference>
<dbReference type="InterPro" id="IPR002316">
    <property type="entry name" value="Pro-tRNA-ligase_IIa"/>
</dbReference>
<dbReference type="InterPro" id="IPR004500">
    <property type="entry name" value="Pro-tRNA-synth_IIa_bac-type"/>
</dbReference>
<dbReference type="InterPro" id="IPR050062">
    <property type="entry name" value="Pro-tRNA_synthetase"/>
</dbReference>
<dbReference type="InterPro" id="IPR023716">
    <property type="entry name" value="Prolyl-tRNA_ligase_IIa_type2"/>
</dbReference>
<dbReference type="InterPro" id="IPR044140">
    <property type="entry name" value="ProRS_anticodon_short"/>
</dbReference>
<dbReference type="InterPro" id="IPR033730">
    <property type="entry name" value="ProRS_core_prok"/>
</dbReference>
<dbReference type="NCBIfam" id="NF008979">
    <property type="entry name" value="PRK12325.1"/>
    <property type="match status" value="1"/>
</dbReference>
<dbReference type="NCBIfam" id="TIGR00409">
    <property type="entry name" value="proS_fam_II"/>
    <property type="match status" value="1"/>
</dbReference>
<dbReference type="PANTHER" id="PTHR42753">
    <property type="entry name" value="MITOCHONDRIAL RIBOSOME PROTEIN L39/PROLYL-TRNA LIGASE FAMILY MEMBER"/>
    <property type="match status" value="1"/>
</dbReference>
<dbReference type="PANTHER" id="PTHR42753:SF2">
    <property type="entry name" value="PROLINE--TRNA LIGASE"/>
    <property type="match status" value="1"/>
</dbReference>
<dbReference type="Pfam" id="PF03129">
    <property type="entry name" value="HGTP_anticodon"/>
    <property type="match status" value="1"/>
</dbReference>
<dbReference type="Pfam" id="PF00587">
    <property type="entry name" value="tRNA-synt_2b"/>
    <property type="match status" value="1"/>
</dbReference>
<dbReference type="PRINTS" id="PR01046">
    <property type="entry name" value="TRNASYNTHPRO"/>
</dbReference>
<dbReference type="SUPFAM" id="SSF52954">
    <property type="entry name" value="Class II aaRS ABD-related"/>
    <property type="match status" value="1"/>
</dbReference>
<dbReference type="SUPFAM" id="SSF55681">
    <property type="entry name" value="Class II aaRS and biotin synthetases"/>
    <property type="match status" value="1"/>
</dbReference>
<dbReference type="PROSITE" id="PS50862">
    <property type="entry name" value="AA_TRNA_LIGASE_II"/>
    <property type="match status" value="1"/>
</dbReference>
<accession>A5EK68</accession>